<protein>
    <recommendedName>
        <fullName evidence="1">Nucleotide-binding protein P9301_05061</fullName>
    </recommendedName>
</protein>
<reference key="1">
    <citation type="journal article" date="2007" name="PLoS Genet.">
        <title>Patterns and implications of gene gain and loss in the evolution of Prochlorococcus.</title>
        <authorList>
            <person name="Kettler G.C."/>
            <person name="Martiny A.C."/>
            <person name="Huang K."/>
            <person name="Zucker J."/>
            <person name="Coleman M.L."/>
            <person name="Rodrigue S."/>
            <person name="Chen F."/>
            <person name="Lapidus A."/>
            <person name="Ferriera S."/>
            <person name="Johnson J."/>
            <person name="Steglich C."/>
            <person name="Church G.M."/>
            <person name="Richardson P."/>
            <person name="Chisholm S.W."/>
        </authorList>
    </citation>
    <scope>NUCLEOTIDE SEQUENCE [LARGE SCALE GENOMIC DNA]</scope>
    <source>
        <strain>MIT 9301</strain>
    </source>
</reference>
<gene>
    <name type="ordered locus">P9301_05061</name>
</gene>
<dbReference type="EMBL" id="CP000576">
    <property type="protein sequence ID" value="ABO17129.1"/>
    <property type="molecule type" value="Genomic_DNA"/>
</dbReference>
<dbReference type="RefSeq" id="WP_011862501.1">
    <property type="nucleotide sequence ID" value="NC_009091.1"/>
</dbReference>
<dbReference type="SMR" id="A3PBK4"/>
<dbReference type="STRING" id="167546.P9301_05061"/>
<dbReference type="KEGG" id="pmg:P9301_05061"/>
<dbReference type="eggNOG" id="COG1666">
    <property type="taxonomic scope" value="Bacteria"/>
</dbReference>
<dbReference type="HOGENOM" id="CLU_099839_0_0_3"/>
<dbReference type="OrthoDB" id="9801447at2"/>
<dbReference type="Proteomes" id="UP000001430">
    <property type="component" value="Chromosome"/>
</dbReference>
<dbReference type="GO" id="GO:0005829">
    <property type="term" value="C:cytosol"/>
    <property type="evidence" value="ECO:0007669"/>
    <property type="project" value="TreeGrafter"/>
</dbReference>
<dbReference type="GO" id="GO:0000166">
    <property type="term" value="F:nucleotide binding"/>
    <property type="evidence" value="ECO:0007669"/>
    <property type="project" value="TreeGrafter"/>
</dbReference>
<dbReference type="CDD" id="cd11740">
    <property type="entry name" value="YajQ_like"/>
    <property type="match status" value="1"/>
</dbReference>
<dbReference type="Gene3D" id="3.30.70.860">
    <property type="match status" value="1"/>
</dbReference>
<dbReference type="Gene3D" id="3.30.70.990">
    <property type="entry name" value="YajQ-like, domain 2"/>
    <property type="match status" value="1"/>
</dbReference>
<dbReference type="HAMAP" id="MF_00632">
    <property type="entry name" value="YajQ"/>
    <property type="match status" value="1"/>
</dbReference>
<dbReference type="InterPro" id="IPR007551">
    <property type="entry name" value="DUF520"/>
</dbReference>
<dbReference type="InterPro" id="IPR035571">
    <property type="entry name" value="UPF0234-like_C"/>
</dbReference>
<dbReference type="InterPro" id="IPR035570">
    <property type="entry name" value="UPF0234_N"/>
</dbReference>
<dbReference type="InterPro" id="IPR036183">
    <property type="entry name" value="YajQ-like_sf"/>
</dbReference>
<dbReference type="NCBIfam" id="NF003819">
    <property type="entry name" value="PRK05412.1"/>
    <property type="match status" value="1"/>
</dbReference>
<dbReference type="PANTHER" id="PTHR30476">
    <property type="entry name" value="UPF0234 PROTEIN YAJQ"/>
    <property type="match status" value="1"/>
</dbReference>
<dbReference type="PANTHER" id="PTHR30476:SF0">
    <property type="entry name" value="UPF0234 PROTEIN YAJQ"/>
    <property type="match status" value="1"/>
</dbReference>
<dbReference type="Pfam" id="PF04461">
    <property type="entry name" value="DUF520"/>
    <property type="match status" value="1"/>
</dbReference>
<dbReference type="SUPFAM" id="SSF89963">
    <property type="entry name" value="YajQ-like"/>
    <property type="match status" value="2"/>
</dbReference>
<accession>A3PBK4</accession>
<comment type="function">
    <text evidence="1">Nucleotide-binding protein.</text>
</comment>
<comment type="similarity">
    <text evidence="1">Belongs to the YajQ family.</text>
</comment>
<keyword id="KW-0547">Nucleotide-binding</keyword>
<keyword id="KW-1185">Reference proteome</keyword>
<sequence>MAESFSFDVVSDFDRQELVNTLDQVKREISQRYDLKDTDTLVDLDKENIFIITNSELTLNAVNDIIRQKAIKRNLSLKIFDYGDIEIVSGNKIKQTILLKQGIKQEIAKKISKNIRDQIKKINVSINGETLRVASKSKNDLQLAIKIVSELEESLNIPLKANNFR</sequence>
<name>Y506_PROM0</name>
<evidence type="ECO:0000255" key="1">
    <source>
        <dbReference type="HAMAP-Rule" id="MF_00632"/>
    </source>
</evidence>
<feature type="chain" id="PRO_1000147311" description="Nucleotide-binding protein P9301_05061">
    <location>
        <begin position="1"/>
        <end position="165"/>
    </location>
</feature>
<proteinExistence type="inferred from homology"/>
<organism>
    <name type="scientific">Prochlorococcus marinus (strain MIT 9301)</name>
    <dbReference type="NCBI Taxonomy" id="167546"/>
    <lineage>
        <taxon>Bacteria</taxon>
        <taxon>Bacillati</taxon>
        <taxon>Cyanobacteriota</taxon>
        <taxon>Cyanophyceae</taxon>
        <taxon>Synechococcales</taxon>
        <taxon>Prochlorococcaceae</taxon>
        <taxon>Prochlorococcus</taxon>
    </lineage>
</organism>